<accession>A6WYK4</accession>
<name>LEPA_BRUA4</name>
<protein>
    <recommendedName>
        <fullName evidence="1">Elongation factor 4</fullName>
        <shortName evidence="1">EF-4</shortName>
        <ecNumber evidence="1">3.6.5.n1</ecNumber>
    </recommendedName>
    <alternativeName>
        <fullName evidence="1">Ribosomal back-translocase LepA</fullName>
    </alternativeName>
</protein>
<feature type="chain" id="PRO_1000032027" description="Elongation factor 4">
    <location>
        <begin position="1"/>
        <end position="602"/>
    </location>
</feature>
<feature type="domain" description="tr-type G">
    <location>
        <begin position="6"/>
        <end position="188"/>
    </location>
</feature>
<feature type="binding site" evidence="1">
    <location>
        <begin position="18"/>
        <end position="23"/>
    </location>
    <ligand>
        <name>GTP</name>
        <dbReference type="ChEBI" id="CHEBI:37565"/>
    </ligand>
</feature>
<feature type="binding site" evidence="1">
    <location>
        <begin position="135"/>
        <end position="138"/>
    </location>
    <ligand>
        <name>GTP</name>
        <dbReference type="ChEBI" id="CHEBI:37565"/>
    </ligand>
</feature>
<reference key="1">
    <citation type="journal article" date="2011" name="J. Bacteriol.">
        <title>Genome of Ochrobactrum anthropi ATCC 49188 T, a versatile opportunistic pathogen and symbiont of several eukaryotic hosts.</title>
        <authorList>
            <person name="Chain P.S."/>
            <person name="Lang D.M."/>
            <person name="Comerci D.J."/>
            <person name="Malfatti S.A."/>
            <person name="Vergez L.M."/>
            <person name="Shin M."/>
            <person name="Ugalde R.A."/>
            <person name="Garcia E."/>
            <person name="Tolmasky M.E."/>
        </authorList>
    </citation>
    <scope>NUCLEOTIDE SEQUENCE [LARGE SCALE GENOMIC DNA]</scope>
    <source>
        <strain>ATCC 49188 / DSM 6882 / CCUG 24695 / JCM 21032 / LMG 3331 / NBRC 15819 / NCTC 12168 / Alc 37</strain>
    </source>
</reference>
<gene>
    <name evidence="1" type="primary">lepA</name>
    <name type="ordered locus">Oant_1341</name>
</gene>
<dbReference type="EC" id="3.6.5.n1" evidence="1"/>
<dbReference type="EMBL" id="CP000758">
    <property type="protein sequence ID" value="ABS14058.1"/>
    <property type="molecule type" value="Genomic_DNA"/>
</dbReference>
<dbReference type="RefSeq" id="WP_010659407.1">
    <property type="nucleotide sequence ID" value="NC_009667.1"/>
</dbReference>
<dbReference type="SMR" id="A6WYK4"/>
<dbReference type="STRING" id="439375.Oant_1341"/>
<dbReference type="GeneID" id="61318156"/>
<dbReference type="KEGG" id="oan:Oant_1341"/>
<dbReference type="eggNOG" id="COG0481">
    <property type="taxonomic scope" value="Bacteria"/>
</dbReference>
<dbReference type="HOGENOM" id="CLU_009995_3_3_5"/>
<dbReference type="PhylomeDB" id="A6WYK4"/>
<dbReference type="Proteomes" id="UP000002301">
    <property type="component" value="Chromosome 1"/>
</dbReference>
<dbReference type="GO" id="GO:0005886">
    <property type="term" value="C:plasma membrane"/>
    <property type="evidence" value="ECO:0007669"/>
    <property type="project" value="UniProtKB-SubCell"/>
</dbReference>
<dbReference type="GO" id="GO:0005525">
    <property type="term" value="F:GTP binding"/>
    <property type="evidence" value="ECO:0007669"/>
    <property type="project" value="UniProtKB-UniRule"/>
</dbReference>
<dbReference type="GO" id="GO:0003924">
    <property type="term" value="F:GTPase activity"/>
    <property type="evidence" value="ECO:0007669"/>
    <property type="project" value="UniProtKB-UniRule"/>
</dbReference>
<dbReference type="GO" id="GO:0097216">
    <property type="term" value="F:guanosine tetraphosphate binding"/>
    <property type="evidence" value="ECO:0007669"/>
    <property type="project" value="UniProtKB-ARBA"/>
</dbReference>
<dbReference type="GO" id="GO:0043022">
    <property type="term" value="F:ribosome binding"/>
    <property type="evidence" value="ECO:0007669"/>
    <property type="project" value="UniProtKB-UniRule"/>
</dbReference>
<dbReference type="GO" id="GO:0003746">
    <property type="term" value="F:translation elongation factor activity"/>
    <property type="evidence" value="ECO:0007669"/>
    <property type="project" value="UniProtKB-UniRule"/>
</dbReference>
<dbReference type="GO" id="GO:0045727">
    <property type="term" value="P:positive regulation of translation"/>
    <property type="evidence" value="ECO:0007669"/>
    <property type="project" value="UniProtKB-UniRule"/>
</dbReference>
<dbReference type="CDD" id="cd03699">
    <property type="entry name" value="EF4_II"/>
    <property type="match status" value="1"/>
</dbReference>
<dbReference type="CDD" id="cd16260">
    <property type="entry name" value="EF4_III"/>
    <property type="match status" value="1"/>
</dbReference>
<dbReference type="CDD" id="cd01890">
    <property type="entry name" value="LepA"/>
    <property type="match status" value="1"/>
</dbReference>
<dbReference type="CDD" id="cd03709">
    <property type="entry name" value="lepA_C"/>
    <property type="match status" value="1"/>
</dbReference>
<dbReference type="FunFam" id="3.40.50.300:FF:000078">
    <property type="entry name" value="Elongation factor 4"/>
    <property type="match status" value="1"/>
</dbReference>
<dbReference type="FunFam" id="2.40.30.10:FF:000015">
    <property type="entry name" value="Translation factor GUF1, mitochondrial"/>
    <property type="match status" value="1"/>
</dbReference>
<dbReference type="FunFam" id="3.30.70.240:FF:000007">
    <property type="entry name" value="Translation factor GUF1, mitochondrial"/>
    <property type="match status" value="1"/>
</dbReference>
<dbReference type="FunFam" id="3.30.70.2570:FF:000001">
    <property type="entry name" value="Translation factor GUF1, mitochondrial"/>
    <property type="match status" value="1"/>
</dbReference>
<dbReference type="FunFam" id="3.30.70.870:FF:000004">
    <property type="entry name" value="Translation factor GUF1, mitochondrial"/>
    <property type="match status" value="1"/>
</dbReference>
<dbReference type="Gene3D" id="3.30.70.240">
    <property type="match status" value="1"/>
</dbReference>
<dbReference type="Gene3D" id="3.30.70.2570">
    <property type="entry name" value="Elongation factor 4, C-terminal domain"/>
    <property type="match status" value="1"/>
</dbReference>
<dbReference type="Gene3D" id="3.30.70.870">
    <property type="entry name" value="Elongation Factor G (Translational Gtpase), domain 3"/>
    <property type="match status" value="1"/>
</dbReference>
<dbReference type="Gene3D" id="3.40.50.300">
    <property type="entry name" value="P-loop containing nucleotide triphosphate hydrolases"/>
    <property type="match status" value="1"/>
</dbReference>
<dbReference type="Gene3D" id="2.40.30.10">
    <property type="entry name" value="Translation factors"/>
    <property type="match status" value="1"/>
</dbReference>
<dbReference type="HAMAP" id="MF_00071">
    <property type="entry name" value="LepA"/>
    <property type="match status" value="1"/>
</dbReference>
<dbReference type="InterPro" id="IPR006297">
    <property type="entry name" value="EF-4"/>
</dbReference>
<dbReference type="InterPro" id="IPR035647">
    <property type="entry name" value="EFG_III/V"/>
</dbReference>
<dbReference type="InterPro" id="IPR000640">
    <property type="entry name" value="EFG_V-like"/>
</dbReference>
<dbReference type="InterPro" id="IPR004161">
    <property type="entry name" value="EFTu-like_2"/>
</dbReference>
<dbReference type="InterPro" id="IPR031157">
    <property type="entry name" value="G_TR_CS"/>
</dbReference>
<dbReference type="InterPro" id="IPR038363">
    <property type="entry name" value="LepA_C_sf"/>
</dbReference>
<dbReference type="InterPro" id="IPR013842">
    <property type="entry name" value="LepA_CTD"/>
</dbReference>
<dbReference type="InterPro" id="IPR035654">
    <property type="entry name" value="LepA_IV"/>
</dbReference>
<dbReference type="InterPro" id="IPR027417">
    <property type="entry name" value="P-loop_NTPase"/>
</dbReference>
<dbReference type="InterPro" id="IPR005225">
    <property type="entry name" value="Small_GTP-bd"/>
</dbReference>
<dbReference type="InterPro" id="IPR000795">
    <property type="entry name" value="T_Tr_GTP-bd_dom"/>
</dbReference>
<dbReference type="NCBIfam" id="TIGR01393">
    <property type="entry name" value="lepA"/>
    <property type="match status" value="1"/>
</dbReference>
<dbReference type="NCBIfam" id="TIGR00231">
    <property type="entry name" value="small_GTP"/>
    <property type="match status" value="1"/>
</dbReference>
<dbReference type="PANTHER" id="PTHR43512:SF4">
    <property type="entry name" value="TRANSLATION FACTOR GUF1 HOMOLOG, CHLOROPLASTIC"/>
    <property type="match status" value="1"/>
</dbReference>
<dbReference type="PANTHER" id="PTHR43512">
    <property type="entry name" value="TRANSLATION FACTOR GUF1-RELATED"/>
    <property type="match status" value="1"/>
</dbReference>
<dbReference type="Pfam" id="PF00679">
    <property type="entry name" value="EFG_C"/>
    <property type="match status" value="1"/>
</dbReference>
<dbReference type="Pfam" id="PF00009">
    <property type="entry name" value="GTP_EFTU"/>
    <property type="match status" value="1"/>
</dbReference>
<dbReference type="Pfam" id="PF03144">
    <property type="entry name" value="GTP_EFTU_D2"/>
    <property type="match status" value="1"/>
</dbReference>
<dbReference type="Pfam" id="PF06421">
    <property type="entry name" value="LepA_C"/>
    <property type="match status" value="1"/>
</dbReference>
<dbReference type="PRINTS" id="PR00315">
    <property type="entry name" value="ELONGATNFCT"/>
</dbReference>
<dbReference type="SMART" id="SM00838">
    <property type="entry name" value="EFG_C"/>
    <property type="match status" value="1"/>
</dbReference>
<dbReference type="SUPFAM" id="SSF54980">
    <property type="entry name" value="EF-G C-terminal domain-like"/>
    <property type="match status" value="2"/>
</dbReference>
<dbReference type="SUPFAM" id="SSF52540">
    <property type="entry name" value="P-loop containing nucleoside triphosphate hydrolases"/>
    <property type="match status" value="1"/>
</dbReference>
<dbReference type="PROSITE" id="PS00301">
    <property type="entry name" value="G_TR_1"/>
    <property type="match status" value="1"/>
</dbReference>
<dbReference type="PROSITE" id="PS51722">
    <property type="entry name" value="G_TR_2"/>
    <property type="match status" value="1"/>
</dbReference>
<proteinExistence type="inferred from homology"/>
<keyword id="KW-0997">Cell inner membrane</keyword>
<keyword id="KW-1003">Cell membrane</keyword>
<keyword id="KW-0342">GTP-binding</keyword>
<keyword id="KW-0378">Hydrolase</keyword>
<keyword id="KW-0472">Membrane</keyword>
<keyword id="KW-0547">Nucleotide-binding</keyword>
<keyword id="KW-0648">Protein biosynthesis</keyword>
<keyword id="KW-1185">Reference proteome</keyword>
<organism>
    <name type="scientific">Brucella anthropi (strain ATCC 49188 / DSM 6882 / CCUG 24695 / JCM 21032 / LMG 3331 / NBRC 15819 / NCTC 12168 / Alc 37)</name>
    <name type="common">Ochrobactrum anthropi</name>
    <dbReference type="NCBI Taxonomy" id="439375"/>
    <lineage>
        <taxon>Bacteria</taxon>
        <taxon>Pseudomonadati</taxon>
        <taxon>Pseudomonadota</taxon>
        <taxon>Alphaproteobacteria</taxon>
        <taxon>Hyphomicrobiales</taxon>
        <taxon>Brucellaceae</taxon>
        <taxon>Brucella/Ochrobactrum group</taxon>
        <taxon>Brucella</taxon>
    </lineage>
</organism>
<sequence>MSTPLDHIRNFSIVAHIDHGKSTLADRLIQLTGGLDTREMKDQVLDSMDIERERGITIKAQTVRLSYKAKNGEDYVLNLIDTPGHVDFAYEVSRSLAACEGSLLVVDASQGVEAQTLANVYQAIDNNHEIVVVLNKIDLPAAEPERVKQQIEEVIGIDAAQAVHISAKTGIGIEDVLEAIVTQLPAPKEGDRNAPLKAMLVDSWYDSYLGVIVLVRIIDGVLKKGQTIRMMGTGAKYPVERTGVFTPKMVQVDELGPGELGFITASIKEVADTRVGDTITEDRRPTNKMLSGFKPAQPVVFCGLFPVDAADFEDLRAAMGKLRLNDASFSFEMETSAALGFGFRCGFLGLLHLEIIQERLEREFNLDLITTAPSVVYRLNMQDGSQKELHNPADMPDVVKINAIEEPWIRATIMTPDDYLGAIMKLCQERRGLQIDLTYVGPRAMITYDLPLNEVVFDFYDRLKSISKGYASFDYNLSDYREGDLVKMSILVNEEPVDALSMLVHRSAAEKRGRALCEKLKELIPQHMFKIPIQAAIGGRIVARETISALRKDVTAKCYGGDVTRKRKLLEKQKEGKKRMRQFGKVEIPQEAFIQALKMGDD</sequence>
<comment type="function">
    <text evidence="1">Required for accurate and efficient protein synthesis under certain stress conditions. May act as a fidelity factor of the translation reaction, by catalyzing a one-codon backward translocation of tRNAs on improperly translocated ribosomes. Back-translocation proceeds from a post-translocation (POST) complex to a pre-translocation (PRE) complex, thus giving elongation factor G a second chance to translocate the tRNAs correctly. Binds to ribosomes in a GTP-dependent manner.</text>
</comment>
<comment type="catalytic activity">
    <reaction evidence="1">
        <text>GTP + H2O = GDP + phosphate + H(+)</text>
        <dbReference type="Rhea" id="RHEA:19669"/>
        <dbReference type="ChEBI" id="CHEBI:15377"/>
        <dbReference type="ChEBI" id="CHEBI:15378"/>
        <dbReference type="ChEBI" id="CHEBI:37565"/>
        <dbReference type="ChEBI" id="CHEBI:43474"/>
        <dbReference type="ChEBI" id="CHEBI:58189"/>
        <dbReference type="EC" id="3.6.5.n1"/>
    </reaction>
</comment>
<comment type="subcellular location">
    <subcellularLocation>
        <location evidence="1">Cell inner membrane</location>
        <topology evidence="1">Peripheral membrane protein</topology>
        <orientation evidence="1">Cytoplasmic side</orientation>
    </subcellularLocation>
</comment>
<comment type="similarity">
    <text evidence="1">Belongs to the TRAFAC class translation factor GTPase superfamily. Classic translation factor GTPase family. LepA subfamily.</text>
</comment>
<evidence type="ECO:0000255" key="1">
    <source>
        <dbReference type="HAMAP-Rule" id="MF_00071"/>
    </source>
</evidence>